<comment type="function">
    <text evidence="1">Key component of the proton channel; it plays a direct role in the translocation of protons across the membrane.</text>
</comment>
<comment type="subunit">
    <text evidence="1">F-type ATPases have 2 components, CF(1) - the catalytic core - and CF(0) - the membrane proton channel. CF(1) has five subunits: alpha(3), beta(3), gamma(1), delta(1), epsilon(1). CF(0) has three main subunits: a(1), b(2) and c(9-12). The alpha and beta chains form an alternating ring which encloses part of the gamma chain. CF(1) is attached to CF(0) by a central stalk formed by the gamma and epsilon chains, while a peripheral stalk is formed by the delta and b chains.</text>
</comment>
<comment type="subcellular location">
    <subcellularLocation>
        <location evidence="1">Cell inner membrane</location>
        <topology evidence="1">Multi-pass membrane protein</topology>
    </subcellularLocation>
</comment>
<comment type="similarity">
    <text evidence="1">Belongs to the ATPase A chain family.</text>
</comment>
<sequence length="270" mass="30185">MAAPGEALTQSGYIEHHLTNLSLAKLGLVADEASFWNVHIDSLFFSVFTGMLFLWVFRSVAKKATTGVPGKLQCFVEMIVEFVADNVKETFHGRNPLIAPLALTIFCWVILMNLMDLVPIDFLPYPAEHWLGIPYLKVVPSADVNITMAMALGVFALMIYYSIKVKGLGGFAKELALHPFNHPIMIPFNLLLEVISLLAKPLSLGMRLFGNMFAGEVVFILIAAMLPWYLQWVGALPWAIFHILVILIQAFVFMMLTIVYLSMAHEDSDH</sequence>
<protein>
    <recommendedName>
        <fullName evidence="1">ATP synthase subunit a</fullName>
    </recommendedName>
    <alternativeName>
        <fullName evidence="1">ATP synthase F0 sector subunit a</fullName>
    </alternativeName>
    <alternativeName>
        <fullName evidence="1">F-ATPase subunit 6</fullName>
    </alternativeName>
</protein>
<dbReference type="EMBL" id="CP001139">
    <property type="protein sequence ID" value="ACH64974.1"/>
    <property type="molecule type" value="Genomic_DNA"/>
</dbReference>
<dbReference type="RefSeq" id="WP_005421592.1">
    <property type="nucleotide sequence ID" value="NC_011184.1"/>
</dbReference>
<dbReference type="SMR" id="B5FCZ7"/>
<dbReference type="GeneID" id="54165320"/>
<dbReference type="KEGG" id="vfm:VFMJ11_2705"/>
<dbReference type="HOGENOM" id="CLU_041018_1_0_6"/>
<dbReference type="Proteomes" id="UP000001857">
    <property type="component" value="Chromosome I"/>
</dbReference>
<dbReference type="GO" id="GO:0005886">
    <property type="term" value="C:plasma membrane"/>
    <property type="evidence" value="ECO:0007669"/>
    <property type="project" value="UniProtKB-SubCell"/>
</dbReference>
<dbReference type="GO" id="GO:0045259">
    <property type="term" value="C:proton-transporting ATP synthase complex"/>
    <property type="evidence" value="ECO:0007669"/>
    <property type="project" value="UniProtKB-KW"/>
</dbReference>
<dbReference type="GO" id="GO:0046933">
    <property type="term" value="F:proton-transporting ATP synthase activity, rotational mechanism"/>
    <property type="evidence" value="ECO:0007669"/>
    <property type="project" value="UniProtKB-UniRule"/>
</dbReference>
<dbReference type="GO" id="GO:0042777">
    <property type="term" value="P:proton motive force-driven plasma membrane ATP synthesis"/>
    <property type="evidence" value="ECO:0007669"/>
    <property type="project" value="TreeGrafter"/>
</dbReference>
<dbReference type="CDD" id="cd00310">
    <property type="entry name" value="ATP-synt_Fo_a_6"/>
    <property type="match status" value="1"/>
</dbReference>
<dbReference type="FunFam" id="1.20.120.220:FF:000002">
    <property type="entry name" value="ATP synthase subunit a"/>
    <property type="match status" value="1"/>
</dbReference>
<dbReference type="Gene3D" id="1.20.120.220">
    <property type="entry name" value="ATP synthase, F0 complex, subunit A"/>
    <property type="match status" value="1"/>
</dbReference>
<dbReference type="HAMAP" id="MF_01393">
    <property type="entry name" value="ATP_synth_a_bact"/>
    <property type="match status" value="1"/>
</dbReference>
<dbReference type="InterPro" id="IPR045082">
    <property type="entry name" value="ATP_syn_F0_a_bact/chloroplast"/>
</dbReference>
<dbReference type="InterPro" id="IPR000568">
    <property type="entry name" value="ATP_synth_F0_asu"/>
</dbReference>
<dbReference type="InterPro" id="IPR023011">
    <property type="entry name" value="ATP_synth_F0_asu_AS"/>
</dbReference>
<dbReference type="InterPro" id="IPR035908">
    <property type="entry name" value="F0_ATP_A_sf"/>
</dbReference>
<dbReference type="NCBIfam" id="TIGR01131">
    <property type="entry name" value="ATP_synt_6_or_A"/>
    <property type="match status" value="1"/>
</dbReference>
<dbReference type="NCBIfam" id="NF004477">
    <property type="entry name" value="PRK05815.1-1"/>
    <property type="match status" value="1"/>
</dbReference>
<dbReference type="PANTHER" id="PTHR42823">
    <property type="entry name" value="ATP SYNTHASE SUBUNIT A, CHLOROPLASTIC"/>
    <property type="match status" value="1"/>
</dbReference>
<dbReference type="PANTHER" id="PTHR42823:SF3">
    <property type="entry name" value="ATP SYNTHASE SUBUNIT A, CHLOROPLASTIC"/>
    <property type="match status" value="1"/>
</dbReference>
<dbReference type="Pfam" id="PF00119">
    <property type="entry name" value="ATP-synt_A"/>
    <property type="match status" value="1"/>
</dbReference>
<dbReference type="PRINTS" id="PR00123">
    <property type="entry name" value="ATPASEA"/>
</dbReference>
<dbReference type="SUPFAM" id="SSF81336">
    <property type="entry name" value="F1F0 ATP synthase subunit A"/>
    <property type="match status" value="1"/>
</dbReference>
<dbReference type="PROSITE" id="PS00449">
    <property type="entry name" value="ATPASE_A"/>
    <property type="match status" value="1"/>
</dbReference>
<evidence type="ECO:0000255" key="1">
    <source>
        <dbReference type="HAMAP-Rule" id="MF_01393"/>
    </source>
</evidence>
<name>ATP6_ALIFM</name>
<reference key="1">
    <citation type="submission" date="2008-08" db="EMBL/GenBank/DDBJ databases">
        <title>Complete sequence of Vibrio fischeri strain MJ11.</title>
        <authorList>
            <person name="Mandel M.J."/>
            <person name="Stabb E.V."/>
            <person name="Ruby E.G."/>
            <person name="Ferriera S."/>
            <person name="Johnson J."/>
            <person name="Kravitz S."/>
            <person name="Beeson K."/>
            <person name="Sutton G."/>
            <person name="Rogers Y.-H."/>
            <person name="Friedman R."/>
            <person name="Frazier M."/>
            <person name="Venter J.C."/>
        </authorList>
    </citation>
    <scope>NUCLEOTIDE SEQUENCE [LARGE SCALE GENOMIC DNA]</scope>
    <source>
        <strain>MJ11</strain>
    </source>
</reference>
<proteinExistence type="inferred from homology"/>
<feature type="chain" id="PRO_0000362500" description="ATP synthase subunit a">
    <location>
        <begin position="1"/>
        <end position="270"/>
    </location>
</feature>
<feature type="transmembrane region" description="Helical" evidence="1">
    <location>
        <begin position="37"/>
        <end position="57"/>
    </location>
</feature>
<feature type="transmembrane region" description="Helical" evidence="1">
    <location>
        <begin position="98"/>
        <end position="118"/>
    </location>
</feature>
<feature type="transmembrane region" description="Helical" evidence="1">
    <location>
        <begin position="143"/>
        <end position="163"/>
    </location>
</feature>
<feature type="transmembrane region" description="Helical" evidence="1">
    <location>
        <begin position="217"/>
        <end position="237"/>
    </location>
</feature>
<feature type="transmembrane region" description="Helical" evidence="1">
    <location>
        <begin position="239"/>
        <end position="259"/>
    </location>
</feature>
<accession>B5FCZ7</accession>
<gene>
    <name evidence="1" type="primary">atpB</name>
    <name type="ordered locus">VFMJ11_2705</name>
</gene>
<keyword id="KW-0066">ATP synthesis</keyword>
<keyword id="KW-0997">Cell inner membrane</keyword>
<keyword id="KW-1003">Cell membrane</keyword>
<keyword id="KW-0138">CF(0)</keyword>
<keyword id="KW-0375">Hydrogen ion transport</keyword>
<keyword id="KW-0406">Ion transport</keyword>
<keyword id="KW-0472">Membrane</keyword>
<keyword id="KW-0812">Transmembrane</keyword>
<keyword id="KW-1133">Transmembrane helix</keyword>
<keyword id="KW-0813">Transport</keyword>
<organism>
    <name type="scientific">Aliivibrio fischeri (strain MJ11)</name>
    <name type="common">Vibrio fischeri</name>
    <dbReference type="NCBI Taxonomy" id="388396"/>
    <lineage>
        <taxon>Bacteria</taxon>
        <taxon>Pseudomonadati</taxon>
        <taxon>Pseudomonadota</taxon>
        <taxon>Gammaproteobacteria</taxon>
        <taxon>Vibrionales</taxon>
        <taxon>Vibrionaceae</taxon>
        <taxon>Aliivibrio</taxon>
    </lineage>
</organism>